<sequence length="673" mass="73743">MGGLASGGDVEPGLPVEVRGSNGAFYKGFVKDVHEDSVTIFFENNWQSERQIPFGDVRLPPPADYNKEITEGDEVEVYSRANEQEPCGWCLARVRMMKGDFYVIEYAACDATYNEIVTLERLRPVNSSSLATKGSFFKVTMAVPEDLREACSNENVHKEFKKALGANCIFLNITNSELFILSTTEAPVKRASLLGDMHFRSLRTKLLLMSRNEEATKHLETSKQLAAAFQEEFTVREDLMGLAIGTHGANIQQARKVPGVTAIELGEETCTFRIYGETPEACRQARSYLEFSEDSVQVPRDLVGKVTGKTGKVIQGIVDKSGVVRVRVEGDNDKKNPKEGGMVPFIFVGTRENISNAQALLEYHLSYLQEVETLRLERLQIDEQLRQIGAGFRPPGSGRGGSGGGSDKAGYTTDESSSSSLHTTRTYGGSYGGRGRGRRTGGPAYGPSSDPSTASETESEKREESNRAGPGDRDPPSRGEESRRRRLGPGKGPPPVPRPTSRYNSSSISSVLKDPDSNPYSLLDTSEPEPPVDSEPGEPPPASARRRRSRRRRTDEDRTVMDGALESDGPNMTENGLEDESRPQRRNRSRRRRNRGNRTDGSISGDRQPVTVADYISRAESQSRQRPLGRTEPSEDSLSGQKGDSVSKLPKGPSENGELSAPLELGSLVNGVS</sequence>
<reference key="1">
    <citation type="journal article" date="1999" name="Gene">
        <title>Five different genes, Eif4a1, Cd68, Supl15h, Sox15 and Fxr2h, are clustered in a 40 kb region of mouse chromosome 11.</title>
        <authorList>
            <person name="Miyashita A."/>
            <person name="Shimizu N."/>
            <person name="Endo N."/>
            <person name="Hanyuu T."/>
            <person name="Ishii N."/>
            <person name="Ito K."/>
            <person name="Itoh Y."/>
            <person name="Shirai M."/>
            <person name="Nakajima T."/>
            <person name="Odani S."/>
            <person name="Kuwano R."/>
        </authorList>
    </citation>
    <scope>NUCLEOTIDE SEQUENCE [GENOMIC DNA / MRNA]</scope>
    <source>
        <strain>129</strain>
    </source>
</reference>
<reference key="2">
    <citation type="journal article" date="2001" name="Proc. Natl. Acad. Sci. U.S.A.">
        <title>A highly conserved protein family interacting with the fragile X mental retardation protein (FMRP) and displaying selective interactions with FMRP-related proteins FXR1P and FXR2P.</title>
        <authorList>
            <person name="Schenck A."/>
            <person name="Bardoni B."/>
            <person name="Moro A."/>
            <person name="Bagni C."/>
            <person name="Mandel J.-L."/>
        </authorList>
    </citation>
    <scope>INTERACTION WITH CYFIP2</scope>
</reference>
<reference key="3">
    <citation type="journal article" date="2002" name="Hum. Mol. Genet.">
        <title>Knockout mouse model for Fxr2: a model for mental retardation.</title>
        <authorList>
            <person name="Bontekoe C.J."/>
            <person name="McIlwain K.L."/>
            <person name="Nieuwenhuizen I.M."/>
            <person name="Yuva-Paylor L.A."/>
            <person name="Nellis A."/>
            <person name="Willemsen R."/>
            <person name="Fang Z."/>
            <person name="Kirkpatrick L."/>
            <person name="Bakker C.E."/>
            <person name="McAninch R."/>
            <person name="Cheng N.C."/>
            <person name="Merriweather M."/>
            <person name="Hoogeveen A.T."/>
            <person name="Nelson D."/>
            <person name="Paylor R."/>
            <person name="Oostra B.A."/>
        </authorList>
    </citation>
    <scope>SUBCELLULAR LOCATION</scope>
    <scope>TISSUE SPECIFICITY</scope>
    <scope>DISRUPTION PHENOTYPE</scope>
</reference>
<reference key="4">
    <citation type="journal article" date="2005" name="Nat. Biotechnol.">
        <title>Immunoaffinity profiling of tyrosine phosphorylation in cancer cells.</title>
        <authorList>
            <person name="Rush J."/>
            <person name="Moritz A."/>
            <person name="Lee K.A."/>
            <person name="Guo A."/>
            <person name="Goss V.L."/>
            <person name="Spek E.J."/>
            <person name="Zhang H."/>
            <person name="Zha X.-M."/>
            <person name="Polakiewicz R.D."/>
            <person name="Comb M.J."/>
        </authorList>
    </citation>
    <scope>IDENTIFICATION BY MASS SPECTROMETRY [LARGE SCALE ANALYSIS]</scope>
</reference>
<reference key="5">
    <citation type="journal article" date="2006" name="Hum. Mol. Genet.">
        <title>Exaggerated behavioral phenotypes in Fmr1/Fxr2 double knockout mice reveal a functional genetic interaction between Fragile X-related proteins.</title>
        <authorList>
            <person name="Spencer C.M."/>
            <person name="Serysheva E."/>
            <person name="Yuva-Paylor L.A."/>
            <person name="Oostra B.A."/>
            <person name="Nelson D.L."/>
            <person name="Paylor R."/>
        </authorList>
    </citation>
    <scope>DISRUPTION PHENOTYPE</scope>
</reference>
<reference key="6">
    <citation type="journal article" date="2007" name="Proc. Natl. Acad. Sci. U.S.A.">
        <title>Large-scale phosphorylation analysis of mouse liver.</title>
        <authorList>
            <person name="Villen J."/>
            <person name="Beausoleil S.A."/>
            <person name="Gerber S.A."/>
            <person name="Gygi S.P."/>
        </authorList>
    </citation>
    <scope>IDENTIFICATION BY MASS SPECTROMETRY [LARGE SCALE ANALYSIS]</scope>
    <source>
        <tissue>Liver</tissue>
    </source>
</reference>
<reference key="7">
    <citation type="journal article" date="2008" name="Neurobiol. Dis.">
        <title>Genes and pathways differentially expressed in the brains of Fxr2 knockout mice.</title>
        <authorList>
            <person name="Cavallaro S."/>
            <person name="Paratore S."/>
            <person name="Fradale F."/>
            <person name="de Vrij F.M."/>
            <person name="Willemsen R."/>
            <person name="Oostra B.A."/>
        </authorList>
    </citation>
    <scope>DISRUPTION PHENOTYPE</scope>
</reference>
<reference key="8">
    <citation type="journal article" date="2009" name="Mol. Cell. Proteomics">
        <title>Large scale localization of protein phosphorylation by use of electron capture dissociation mass spectrometry.</title>
        <authorList>
            <person name="Sweet S.M."/>
            <person name="Bailey C.M."/>
            <person name="Cunningham D.L."/>
            <person name="Heath J.K."/>
            <person name="Cooper H.J."/>
        </authorList>
    </citation>
    <scope>IDENTIFICATION BY MASS SPECTROMETRY [LARGE SCALE ANALYSIS]</scope>
    <source>
        <tissue>Embryonic fibroblast</tissue>
    </source>
</reference>
<reference key="9">
    <citation type="journal article" date="2010" name="Cell">
        <title>A tissue-specific atlas of mouse protein phosphorylation and expression.</title>
        <authorList>
            <person name="Huttlin E.L."/>
            <person name="Jedrychowski M.P."/>
            <person name="Elias J.E."/>
            <person name="Goswami T."/>
            <person name="Rad R."/>
            <person name="Beausoleil S.A."/>
            <person name="Villen J."/>
            <person name="Haas W."/>
            <person name="Sowa M.E."/>
            <person name="Gygi S.P."/>
        </authorList>
    </citation>
    <scope>PHOSPHORYLATION [LARGE SCALE ANALYSIS] AT THR-413; SER-602 AND SER-604</scope>
    <scope>IDENTIFICATION BY MASS SPECTROMETRY [LARGE SCALE ANALYSIS]</scope>
    <source>
        <tissue>Brain</tissue>
        <tissue>Brown adipose tissue</tissue>
        <tissue>Heart</tissue>
        <tissue>Kidney</tissue>
        <tissue>Liver</tissue>
        <tissue>Lung</tissue>
        <tissue>Spleen</tissue>
        <tissue>Testis</tissue>
    </source>
</reference>
<reference key="10">
    <citation type="journal article" date="2011" name="Neuron">
        <title>RNA-binding protein FXR2 regulates adult hippocampal neurogenesis by reducing Noggin expression.</title>
        <authorList>
            <person name="Guo W."/>
            <person name="Zhang L."/>
            <person name="Christopher D.M."/>
            <person name="Teng Z.Q."/>
            <person name="Fausett S.R."/>
            <person name="Liu C."/>
            <person name="George O.L."/>
            <person name="Klingensmith J."/>
            <person name="Jin P."/>
            <person name="Zhao X."/>
        </authorList>
    </citation>
    <scope>FUNCTION</scope>
    <scope>TISSUE SPECIFICITY</scope>
    <scope>DISRUPTION PHENOTYPE</scope>
</reference>
<reference key="11">
    <citation type="journal article" date="2016" name="Elife">
        <title>Sub-synaptic, multiplexed analysis of proteins reveals Fragile X related protein 2 is mislocalized in Fmr1 KO synapses.</title>
        <authorList>
            <person name="Wang G.X."/>
            <person name="Smith S.J."/>
            <person name="Mourrain P."/>
        </authorList>
    </citation>
    <scope>SUBCELLULAR LOCATION</scope>
</reference>
<feature type="chain" id="PRO_0000050111" description="RNA-binding protein FXR2">
    <location>
        <begin position="1"/>
        <end position="673"/>
    </location>
</feature>
<feature type="domain" description="Agenet-like 1" evidence="4">
    <location>
        <begin position="14"/>
        <end position="60"/>
    </location>
</feature>
<feature type="domain" description="Agenet-like 2" evidence="4">
    <location>
        <begin position="73"/>
        <end position="125"/>
    </location>
</feature>
<feature type="domain" description="KH 1" evidence="3">
    <location>
        <begin position="228"/>
        <end position="276"/>
    </location>
</feature>
<feature type="domain" description="KH 2" evidence="3">
    <location>
        <begin position="291"/>
        <end position="340"/>
    </location>
</feature>
<feature type="region of interest" description="Disordered" evidence="5">
    <location>
        <begin position="388"/>
        <end position="673"/>
    </location>
</feature>
<feature type="compositionally biased region" description="Gly residues" evidence="5">
    <location>
        <begin position="397"/>
        <end position="407"/>
    </location>
</feature>
<feature type="compositionally biased region" description="Polar residues" evidence="5">
    <location>
        <begin position="413"/>
        <end position="422"/>
    </location>
</feature>
<feature type="compositionally biased region" description="Basic and acidic residues" evidence="5">
    <location>
        <begin position="458"/>
        <end position="483"/>
    </location>
</feature>
<feature type="compositionally biased region" description="Acidic residues" evidence="5">
    <location>
        <begin position="526"/>
        <end position="536"/>
    </location>
</feature>
<feature type="compositionally biased region" description="Basic residues" evidence="5">
    <location>
        <begin position="584"/>
        <end position="596"/>
    </location>
</feature>
<feature type="modified residue" description="Phosphotyrosine" evidence="2">
    <location>
        <position position="78"/>
    </location>
</feature>
<feature type="modified residue" description="Phosphoserine" evidence="1">
    <location>
        <position position="192"/>
    </location>
</feature>
<feature type="modified residue" description="Phosphothreonine" evidence="16">
    <location>
        <position position="413"/>
    </location>
</feature>
<feature type="modified residue" description="Phosphoserine" evidence="2">
    <location>
        <position position="452"/>
    </location>
</feature>
<feature type="modified residue" description="Phosphoserine" evidence="1">
    <location>
        <position position="455"/>
    </location>
</feature>
<feature type="modified residue" description="Phosphoserine" evidence="2">
    <location>
        <position position="465"/>
    </location>
</feature>
<feature type="modified residue" description="Phosphoserine" evidence="1">
    <location>
        <position position="534"/>
    </location>
</feature>
<feature type="modified residue" description="Phosphoserine" evidence="1">
    <location>
        <position position="567"/>
    </location>
</feature>
<feature type="modified residue" description="Phosphoserine" evidence="1">
    <location>
        <position position="581"/>
    </location>
</feature>
<feature type="modified residue" description="Phosphothreonine" evidence="1">
    <location>
        <position position="599"/>
    </location>
</feature>
<feature type="modified residue" description="Phosphoserine" evidence="16">
    <location>
        <position position="602"/>
    </location>
</feature>
<feature type="modified residue" description="Phosphoserine" evidence="16">
    <location>
        <position position="604"/>
    </location>
</feature>
<dbReference type="EMBL" id="AB025269">
    <property type="protein sequence ID" value="BAA82147.1"/>
    <property type="molecule type" value="mRNA"/>
</dbReference>
<dbReference type="EMBL" id="AB025311">
    <property type="protein sequence ID" value="BAA82249.1"/>
    <property type="molecule type" value="Genomic_DNA"/>
</dbReference>
<dbReference type="SMR" id="Q9WVR4"/>
<dbReference type="FunCoup" id="Q9WVR4">
    <property type="interactions" value="575"/>
</dbReference>
<dbReference type="IntAct" id="Q9WVR4">
    <property type="interactions" value="7"/>
</dbReference>
<dbReference type="MINT" id="Q9WVR4"/>
<dbReference type="STRING" id="10090.ENSMUSP00000018909"/>
<dbReference type="GlyGen" id="Q9WVR4">
    <property type="glycosylation" value="3 sites, 1 N-linked glycan (1 site), 1 O-linked glycan (1 site)"/>
</dbReference>
<dbReference type="iPTMnet" id="Q9WVR4"/>
<dbReference type="PhosphoSitePlus" id="Q9WVR4"/>
<dbReference type="jPOST" id="Q9WVR4"/>
<dbReference type="PaxDb" id="10090-ENSMUSP00000018909"/>
<dbReference type="PeptideAtlas" id="Q9WVR4"/>
<dbReference type="ProteomicsDB" id="266892"/>
<dbReference type="Pumba" id="Q9WVR4"/>
<dbReference type="AGR" id="MGI:1346074"/>
<dbReference type="MGI" id="MGI:1346074">
    <property type="gene designation" value="Fxr2"/>
</dbReference>
<dbReference type="eggNOG" id="ENOG502QPKJ">
    <property type="taxonomic scope" value="Eukaryota"/>
</dbReference>
<dbReference type="InParanoid" id="Q9WVR4"/>
<dbReference type="CD-CODE" id="764D0258">
    <property type="entry name" value="Neuronal RNP granule"/>
</dbReference>
<dbReference type="CD-CODE" id="CE726F99">
    <property type="entry name" value="Postsynaptic density"/>
</dbReference>
<dbReference type="ChiTaRS" id="Fxr2">
    <property type="organism name" value="mouse"/>
</dbReference>
<dbReference type="PRO" id="PR:Q9WVR4"/>
<dbReference type="Proteomes" id="UP000000589">
    <property type="component" value="Unplaced"/>
</dbReference>
<dbReference type="RNAct" id="Q9WVR4">
    <property type="molecule type" value="protein"/>
</dbReference>
<dbReference type="GO" id="GO:0005737">
    <property type="term" value="C:cytoplasm"/>
    <property type="evidence" value="ECO:0000314"/>
    <property type="project" value="UniProtKB"/>
</dbReference>
<dbReference type="GO" id="GO:0036464">
    <property type="term" value="C:cytoplasmic ribonucleoprotein granule"/>
    <property type="evidence" value="ECO:0007669"/>
    <property type="project" value="UniProtKB-SubCell"/>
</dbReference>
<dbReference type="GO" id="GO:0030425">
    <property type="term" value="C:dendrite"/>
    <property type="evidence" value="ECO:0000314"/>
    <property type="project" value="MGI"/>
</dbReference>
<dbReference type="GO" id="GO:0098978">
    <property type="term" value="C:glutamatergic synapse"/>
    <property type="evidence" value="ECO:0000314"/>
    <property type="project" value="SynGO"/>
</dbReference>
<dbReference type="GO" id="GO:0098794">
    <property type="term" value="C:postsynapse"/>
    <property type="evidence" value="ECO:0000314"/>
    <property type="project" value="SynGO"/>
</dbReference>
<dbReference type="GO" id="GO:0005840">
    <property type="term" value="C:ribosome"/>
    <property type="evidence" value="ECO:0000314"/>
    <property type="project" value="MGI"/>
</dbReference>
<dbReference type="GO" id="GO:0003729">
    <property type="term" value="F:mRNA binding"/>
    <property type="evidence" value="ECO:0007669"/>
    <property type="project" value="InterPro"/>
</dbReference>
<dbReference type="GO" id="GO:0046982">
    <property type="term" value="F:protein heterodimerization activity"/>
    <property type="evidence" value="ECO:0000250"/>
    <property type="project" value="UniProtKB"/>
</dbReference>
<dbReference type="GO" id="GO:0042803">
    <property type="term" value="F:protein homodimerization activity"/>
    <property type="evidence" value="ECO:0000250"/>
    <property type="project" value="UniProtKB"/>
</dbReference>
<dbReference type="GO" id="GO:0021542">
    <property type="term" value="P:dentate gyrus development"/>
    <property type="evidence" value="ECO:0000315"/>
    <property type="project" value="UniProtKB"/>
</dbReference>
<dbReference type="GO" id="GO:0061157">
    <property type="term" value="P:mRNA destabilization"/>
    <property type="evidence" value="ECO:0000315"/>
    <property type="project" value="UniProtKB"/>
</dbReference>
<dbReference type="GO" id="GO:0006417">
    <property type="term" value="P:regulation of translation"/>
    <property type="evidence" value="ECO:0007669"/>
    <property type="project" value="InterPro"/>
</dbReference>
<dbReference type="CDD" id="cd22505">
    <property type="entry name" value="KH_I_FXR2_rpt1"/>
    <property type="match status" value="1"/>
</dbReference>
<dbReference type="CDD" id="cd22508">
    <property type="entry name" value="KH_I_FXR2_rpt2"/>
    <property type="match status" value="1"/>
</dbReference>
<dbReference type="CDD" id="cd20473">
    <property type="entry name" value="Tudor_Agenet_FXR2_rpt1"/>
    <property type="match status" value="1"/>
</dbReference>
<dbReference type="CDD" id="cd20476">
    <property type="entry name" value="Tudor_Agenet_FXR2_rpt2"/>
    <property type="match status" value="1"/>
</dbReference>
<dbReference type="FunFam" id="2.30.30.140:FF:000001">
    <property type="entry name" value="Fragile X mental retardation 1, isoform CRA_e"/>
    <property type="match status" value="1"/>
</dbReference>
<dbReference type="FunFam" id="2.30.30.140:FF:000002">
    <property type="entry name" value="Fragile X mental retardation 1, isoform CRA_e"/>
    <property type="match status" value="1"/>
</dbReference>
<dbReference type="FunFam" id="3.30.1370.10:FF:000004">
    <property type="entry name" value="Fragile X mental retardation 1, isoform CRA_e"/>
    <property type="match status" value="1"/>
</dbReference>
<dbReference type="FunFam" id="3.30.1370.10:FF:000017">
    <property type="entry name" value="Fragile X mental retardation syndrome-related protein 1"/>
    <property type="match status" value="1"/>
</dbReference>
<dbReference type="Gene3D" id="2.30.30.140">
    <property type="match status" value="2"/>
</dbReference>
<dbReference type="Gene3D" id="3.30.1370.10">
    <property type="entry name" value="K Homology domain, type 1"/>
    <property type="match status" value="2"/>
</dbReference>
<dbReference type="InterPro" id="IPR008395">
    <property type="entry name" value="Agenet-like_dom"/>
</dbReference>
<dbReference type="InterPro" id="IPR040148">
    <property type="entry name" value="FMR1"/>
</dbReference>
<dbReference type="InterPro" id="IPR022034">
    <property type="entry name" value="FMR1-like_C_core"/>
</dbReference>
<dbReference type="InterPro" id="IPR040472">
    <property type="entry name" value="FMRP_KH0"/>
</dbReference>
<dbReference type="InterPro" id="IPR032172">
    <property type="entry name" value="FXR1_C1"/>
</dbReference>
<dbReference type="InterPro" id="IPR004087">
    <property type="entry name" value="KH_dom"/>
</dbReference>
<dbReference type="InterPro" id="IPR004088">
    <property type="entry name" value="KH_dom_type_1"/>
</dbReference>
<dbReference type="InterPro" id="IPR036612">
    <property type="entry name" value="KH_dom_type_1_sf"/>
</dbReference>
<dbReference type="InterPro" id="IPR047422">
    <property type="entry name" value="KH_I_FXR2_rpt1"/>
</dbReference>
<dbReference type="InterPro" id="IPR047424">
    <property type="entry name" value="KH_I_FXR2_rpt2"/>
</dbReference>
<dbReference type="InterPro" id="IPR047421">
    <property type="entry name" value="Tudor_Agenet_FXR2_rpt1"/>
</dbReference>
<dbReference type="InterPro" id="IPR047420">
    <property type="entry name" value="Tudor_Agenet_FXR2_rpt2"/>
</dbReference>
<dbReference type="InterPro" id="IPR041560">
    <property type="entry name" value="Tudor_FRM1"/>
</dbReference>
<dbReference type="PANTHER" id="PTHR10603">
    <property type="entry name" value="FRAGILE X MENTAL RETARDATION SYNDROME-RELATED PROTEIN"/>
    <property type="match status" value="1"/>
</dbReference>
<dbReference type="PANTHER" id="PTHR10603:SF3">
    <property type="entry name" value="RNA-BINDING PROTEIN FXR2"/>
    <property type="match status" value="1"/>
</dbReference>
<dbReference type="Pfam" id="PF05641">
    <property type="entry name" value="Agenet"/>
    <property type="match status" value="1"/>
</dbReference>
<dbReference type="Pfam" id="PF12235">
    <property type="entry name" value="FXMRP1_C_core"/>
    <property type="match status" value="1"/>
</dbReference>
<dbReference type="Pfam" id="PF16096">
    <property type="entry name" value="FXR_C1"/>
    <property type="match status" value="1"/>
</dbReference>
<dbReference type="Pfam" id="PF00013">
    <property type="entry name" value="KH_1"/>
    <property type="match status" value="2"/>
</dbReference>
<dbReference type="Pfam" id="PF17904">
    <property type="entry name" value="KH_9"/>
    <property type="match status" value="1"/>
</dbReference>
<dbReference type="Pfam" id="PF18336">
    <property type="entry name" value="Tudor_FRX1"/>
    <property type="match status" value="1"/>
</dbReference>
<dbReference type="SMART" id="SM00322">
    <property type="entry name" value="KH"/>
    <property type="match status" value="2"/>
</dbReference>
<dbReference type="SUPFAM" id="SSF54791">
    <property type="entry name" value="Eukaryotic type KH-domain (KH-domain type I)"/>
    <property type="match status" value="2"/>
</dbReference>
<dbReference type="PROSITE" id="PS51641">
    <property type="entry name" value="AGENET_LIKE"/>
    <property type="match status" value="2"/>
</dbReference>
<dbReference type="PROSITE" id="PS50084">
    <property type="entry name" value="KH_TYPE_1"/>
    <property type="match status" value="2"/>
</dbReference>
<protein>
    <recommendedName>
        <fullName evidence="14">RNA-binding protein FXR2</fullName>
        <shortName evidence="13">FXR2P</shortName>
    </recommendedName>
</protein>
<comment type="function">
    <text evidence="2 10">mRNA-binding protein that acts as a regulator of mRNAs translation and/or stability, and which is required for adult hippocampal neurogenesis (PubMed:21658585). Specifically binds to AU-rich elements (AREs) in the 3'-UTR of target mRNAs (PubMed:21658585). Promotes formation of some phase-separated membraneless compartment by undergoing liquid-liquid phase separation upon binding to AREs-containing mRNAs: mRNAs storage into membraneless compartments regulates their translation and/or stability (By similarity). Acts as a regulator of adult hippocampal neurogenesis by regulating translation and/or stability of NOG mRNA, thereby preventing NOG protein expression in the dentate gyrus (PubMed:21658585).</text>
</comment>
<comment type="subunit">
    <text evidence="1 6">Interacts with FMR1 (By similarity). Interacts with FXR1 (By similarity). Interacts with TDRD3 (By similarity). Interacts with HABP4 (By similarity). Interacts with CYFIP2 but not with CYFIP1 (PubMed:11438699).</text>
</comment>
<comment type="subcellular location">
    <subcellularLocation>
        <location evidence="2">Cytoplasm</location>
        <location evidence="2">Cytoplasmic ribonucleoprotein granule</location>
    </subcellularLocation>
    <subcellularLocation>
        <location evidence="7">Cytoplasm</location>
    </subcellularLocation>
    <subcellularLocation>
        <location evidence="11">Postsynapse</location>
    </subcellularLocation>
    <text evidence="2 11">Specifically localizes to cytoplasmic ribonucleoprotein membraneless compartments (By similarity). Localization to the post-synaptic region is dependent on FMR1 (PubMed:27770568).</text>
</comment>
<comment type="tissue specificity">
    <text evidence="7 10">Highly expressed in brain and testis (PubMed:11875043). In brain, expressed in the subventricular zone of the lateral ventricles and in most of the granule neurons of the dentate gyrus of the hippocampus (PubMed:21658585).</text>
</comment>
<comment type="domain">
    <text evidence="1">The tandem Agenet-like domains preferentially recognize trimethylated histone peptides.</text>
</comment>
<comment type="domain">
    <text evidence="2">Disordered region at the C-terminus undergoes liquid-liquid phase separation (LLPS) for the formation of a membraneless compartment that stores mRNAs.</text>
</comment>
<comment type="disruption phenotype">
    <text evidence="7 8 9 10">No visible phenotype; mice are viable and fertile and do not exhibit any overt phenotype (PubMed:11875043). Mice however show behavioral abnormalities, characterized by hyperactivity (PubMed:11875043). Increased proliferation of radial glia-like neural stem/progenitor cells in the adult dentate gyrus caused by increased Nog (Noggin) expression and subsequently reduced BMP signaling (PubMed:21658585). Misregulation of a number of transcripts involved in memory or cognitions is observed in the brain of mutant mice (PubMed:18930145). Mice lacking both Fxr2 and Fmr1 display exaggerated learning deficits, characterized by prepulse inhibition of acoustic startle response and contextual fear conditioning compared with single mutant (Fxr2 or Fmr1) mice (PubMed:16675531).</text>
</comment>
<comment type="similarity">
    <text evidence="14">Belongs to the FMR1 family.</text>
</comment>
<accession>Q9WVR4</accession>
<accession>Q9WVR5</accession>
<name>FXR2_MOUSE</name>
<proteinExistence type="evidence at protein level"/>
<keyword id="KW-0963">Cytoplasm</keyword>
<keyword id="KW-0597">Phosphoprotein</keyword>
<keyword id="KW-1185">Reference proteome</keyword>
<keyword id="KW-0677">Repeat</keyword>
<keyword id="KW-0694">RNA-binding</keyword>
<keyword id="KW-0770">Synapse</keyword>
<organism>
    <name type="scientific">Mus musculus</name>
    <name type="common">Mouse</name>
    <dbReference type="NCBI Taxonomy" id="10090"/>
    <lineage>
        <taxon>Eukaryota</taxon>
        <taxon>Metazoa</taxon>
        <taxon>Chordata</taxon>
        <taxon>Craniata</taxon>
        <taxon>Vertebrata</taxon>
        <taxon>Euteleostomi</taxon>
        <taxon>Mammalia</taxon>
        <taxon>Eutheria</taxon>
        <taxon>Euarchontoglires</taxon>
        <taxon>Glires</taxon>
        <taxon>Rodentia</taxon>
        <taxon>Myomorpha</taxon>
        <taxon>Muroidea</taxon>
        <taxon>Muridae</taxon>
        <taxon>Murinae</taxon>
        <taxon>Mus</taxon>
        <taxon>Mus</taxon>
    </lineage>
</organism>
<gene>
    <name evidence="12 15" type="primary">Fxr2</name>
    <name evidence="12" type="synonym">Fxr2h</name>
</gene>
<evidence type="ECO:0000250" key="1">
    <source>
        <dbReference type="UniProtKB" id="P51116"/>
    </source>
</evidence>
<evidence type="ECO:0000250" key="2">
    <source>
        <dbReference type="UniProtKB" id="Q61584"/>
    </source>
</evidence>
<evidence type="ECO:0000255" key="3">
    <source>
        <dbReference type="PROSITE-ProRule" id="PRU00117"/>
    </source>
</evidence>
<evidence type="ECO:0000255" key="4">
    <source>
        <dbReference type="PROSITE-ProRule" id="PRU00973"/>
    </source>
</evidence>
<evidence type="ECO:0000256" key="5">
    <source>
        <dbReference type="SAM" id="MobiDB-lite"/>
    </source>
</evidence>
<evidence type="ECO:0000269" key="6">
    <source>
    </source>
</evidence>
<evidence type="ECO:0000269" key="7">
    <source>
    </source>
</evidence>
<evidence type="ECO:0000269" key="8">
    <source>
    </source>
</evidence>
<evidence type="ECO:0000269" key="9">
    <source>
    </source>
</evidence>
<evidence type="ECO:0000269" key="10">
    <source>
    </source>
</evidence>
<evidence type="ECO:0000269" key="11">
    <source>
    </source>
</evidence>
<evidence type="ECO:0000303" key="12">
    <source>
    </source>
</evidence>
<evidence type="ECO:0000303" key="13">
    <source>
    </source>
</evidence>
<evidence type="ECO:0000305" key="14"/>
<evidence type="ECO:0000312" key="15">
    <source>
        <dbReference type="MGI" id="MGI:1346074"/>
    </source>
</evidence>
<evidence type="ECO:0007744" key="16">
    <source>
    </source>
</evidence>